<accession>F1Q575</accession>
<organism>
    <name type="scientific">Danio rerio</name>
    <name type="common">Zebrafish</name>
    <name type="synonym">Brachydanio rerio</name>
    <dbReference type="NCBI Taxonomy" id="7955"/>
    <lineage>
        <taxon>Eukaryota</taxon>
        <taxon>Metazoa</taxon>
        <taxon>Chordata</taxon>
        <taxon>Craniata</taxon>
        <taxon>Vertebrata</taxon>
        <taxon>Euteleostomi</taxon>
        <taxon>Actinopterygii</taxon>
        <taxon>Neopterygii</taxon>
        <taxon>Teleostei</taxon>
        <taxon>Ostariophysi</taxon>
        <taxon>Cypriniformes</taxon>
        <taxon>Danionidae</taxon>
        <taxon>Danioninae</taxon>
        <taxon>Danio</taxon>
    </lineage>
</organism>
<protein>
    <recommendedName>
        <fullName evidence="3">ATP-dependent (S)-NAD(P)H-hydrate dehydratase</fullName>
        <ecNumber evidence="2 3">4.2.1.93</ecNumber>
    </recommendedName>
    <alternativeName>
        <fullName evidence="3">ATP-dependent NAD(P)HX dehydratase</fullName>
    </alternativeName>
    <alternativeName>
        <fullName evidence="1">NAD(P)HX dehydratase</fullName>
    </alternativeName>
</protein>
<reference key="1">
    <citation type="journal article" date="2013" name="Nature">
        <title>The zebrafish reference genome sequence and its relationship to the human genome.</title>
        <authorList>
            <person name="Howe K."/>
            <person name="Clark M.D."/>
            <person name="Torroja C.F."/>
            <person name="Torrance J."/>
            <person name="Berthelot C."/>
            <person name="Muffato M."/>
            <person name="Collins J.E."/>
            <person name="Humphray S."/>
            <person name="McLaren K."/>
            <person name="Matthews L."/>
            <person name="McLaren S."/>
            <person name="Sealy I."/>
            <person name="Caccamo M."/>
            <person name="Churcher C."/>
            <person name="Scott C."/>
            <person name="Barrett J.C."/>
            <person name="Koch R."/>
            <person name="Rauch G.J."/>
            <person name="White S."/>
            <person name="Chow W."/>
            <person name="Kilian B."/>
            <person name="Quintais L.T."/>
            <person name="Guerra-Assuncao J.A."/>
            <person name="Zhou Y."/>
            <person name="Gu Y."/>
            <person name="Yen J."/>
            <person name="Vogel J.H."/>
            <person name="Eyre T."/>
            <person name="Redmond S."/>
            <person name="Banerjee R."/>
            <person name="Chi J."/>
            <person name="Fu B."/>
            <person name="Langley E."/>
            <person name="Maguire S.F."/>
            <person name="Laird G.K."/>
            <person name="Lloyd D."/>
            <person name="Kenyon E."/>
            <person name="Donaldson S."/>
            <person name="Sehra H."/>
            <person name="Almeida-King J."/>
            <person name="Loveland J."/>
            <person name="Trevanion S."/>
            <person name="Jones M."/>
            <person name="Quail M."/>
            <person name="Willey D."/>
            <person name="Hunt A."/>
            <person name="Burton J."/>
            <person name="Sims S."/>
            <person name="McLay K."/>
            <person name="Plumb B."/>
            <person name="Davis J."/>
            <person name="Clee C."/>
            <person name="Oliver K."/>
            <person name="Clark R."/>
            <person name="Riddle C."/>
            <person name="Elliot D."/>
            <person name="Threadgold G."/>
            <person name="Harden G."/>
            <person name="Ware D."/>
            <person name="Begum S."/>
            <person name="Mortimore B."/>
            <person name="Kerry G."/>
            <person name="Heath P."/>
            <person name="Phillimore B."/>
            <person name="Tracey A."/>
            <person name="Corby N."/>
            <person name="Dunn M."/>
            <person name="Johnson C."/>
            <person name="Wood J."/>
            <person name="Clark S."/>
            <person name="Pelan S."/>
            <person name="Griffiths G."/>
            <person name="Smith M."/>
            <person name="Glithero R."/>
            <person name="Howden P."/>
            <person name="Barker N."/>
            <person name="Lloyd C."/>
            <person name="Stevens C."/>
            <person name="Harley J."/>
            <person name="Holt K."/>
            <person name="Panagiotidis G."/>
            <person name="Lovell J."/>
            <person name="Beasley H."/>
            <person name="Henderson C."/>
            <person name="Gordon D."/>
            <person name="Auger K."/>
            <person name="Wright D."/>
            <person name="Collins J."/>
            <person name="Raisen C."/>
            <person name="Dyer L."/>
            <person name="Leung K."/>
            <person name="Robertson L."/>
            <person name="Ambridge K."/>
            <person name="Leongamornlert D."/>
            <person name="McGuire S."/>
            <person name="Gilderthorp R."/>
            <person name="Griffiths C."/>
            <person name="Manthravadi D."/>
            <person name="Nichol S."/>
            <person name="Barker G."/>
            <person name="Whitehead S."/>
            <person name="Kay M."/>
            <person name="Brown J."/>
            <person name="Murnane C."/>
            <person name="Gray E."/>
            <person name="Humphries M."/>
            <person name="Sycamore N."/>
            <person name="Barker D."/>
            <person name="Saunders D."/>
            <person name="Wallis J."/>
            <person name="Babbage A."/>
            <person name="Hammond S."/>
            <person name="Mashreghi-Mohammadi M."/>
            <person name="Barr L."/>
            <person name="Martin S."/>
            <person name="Wray P."/>
            <person name="Ellington A."/>
            <person name="Matthews N."/>
            <person name="Ellwood M."/>
            <person name="Woodmansey R."/>
            <person name="Clark G."/>
            <person name="Cooper J."/>
            <person name="Tromans A."/>
            <person name="Grafham D."/>
            <person name="Skuce C."/>
            <person name="Pandian R."/>
            <person name="Andrews R."/>
            <person name="Harrison E."/>
            <person name="Kimberley A."/>
            <person name="Garnett J."/>
            <person name="Fosker N."/>
            <person name="Hall R."/>
            <person name="Garner P."/>
            <person name="Kelly D."/>
            <person name="Bird C."/>
            <person name="Palmer S."/>
            <person name="Gehring I."/>
            <person name="Berger A."/>
            <person name="Dooley C.M."/>
            <person name="Ersan-Urun Z."/>
            <person name="Eser C."/>
            <person name="Geiger H."/>
            <person name="Geisler M."/>
            <person name="Karotki L."/>
            <person name="Kirn A."/>
            <person name="Konantz J."/>
            <person name="Konantz M."/>
            <person name="Oberlander M."/>
            <person name="Rudolph-Geiger S."/>
            <person name="Teucke M."/>
            <person name="Lanz C."/>
            <person name="Raddatz G."/>
            <person name="Osoegawa K."/>
            <person name="Zhu B."/>
            <person name="Rapp A."/>
            <person name="Widaa S."/>
            <person name="Langford C."/>
            <person name="Yang F."/>
            <person name="Schuster S.C."/>
            <person name="Carter N.P."/>
            <person name="Harrow J."/>
            <person name="Ning Z."/>
            <person name="Herrero J."/>
            <person name="Searle S.M."/>
            <person name="Enright A."/>
            <person name="Geisler R."/>
            <person name="Plasterk R.H."/>
            <person name="Lee C."/>
            <person name="Westerfield M."/>
            <person name="de Jong P.J."/>
            <person name="Zon L.I."/>
            <person name="Postlethwait J.H."/>
            <person name="Nusslein-Volhard C."/>
            <person name="Hubbard T.J."/>
            <person name="Roest Crollius H."/>
            <person name="Rogers J."/>
            <person name="Stemple D.L."/>
        </authorList>
    </citation>
    <scope>NUCLEOTIDE SEQUENCE [LARGE SCALE GENOMIC DNA]</scope>
    <source>
        <strain>Tuebingen</strain>
    </source>
</reference>
<name>NNRD_DANRE</name>
<proteinExistence type="inferred from homology"/>
<evidence type="ECO:0000250" key="1">
    <source>
        <dbReference type="UniProtKB" id="Q8IW45"/>
    </source>
</evidence>
<evidence type="ECO:0000250" key="2">
    <source>
        <dbReference type="UniProtKB" id="Q9CZ42"/>
    </source>
</evidence>
<evidence type="ECO:0000255" key="3">
    <source>
        <dbReference type="HAMAP-Rule" id="MF_03157"/>
    </source>
</evidence>
<feature type="chain" id="PRO_0000416160" description="ATP-dependent (S)-NAD(P)H-hydrate dehydratase">
    <location>
        <begin position="1"/>
        <end position="330"/>
    </location>
</feature>
<feature type="domain" description="YjeF C-terminal" evidence="3">
    <location>
        <begin position="36"/>
        <end position="327"/>
    </location>
</feature>
<feature type="binding site" evidence="3">
    <location>
        <position position="136"/>
    </location>
    <ligand>
        <name>(6S)-NADPHX</name>
        <dbReference type="ChEBI" id="CHEBI:64076"/>
    </ligand>
</feature>
<feature type="binding site" evidence="3">
    <location>
        <begin position="189"/>
        <end position="195"/>
    </location>
    <ligand>
        <name>(6S)-NADPHX</name>
        <dbReference type="ChEBI" id="CHEBI:64076"/>
    </ligand>
</feature>
<feature type="binding site" evidence="3">
    <location>
        <begin position="229"/>
        <end position="233"/>
    </location>
    <ligand>
        <name>ATP</name>
        <dbReference type="ChEBI" id="CHEBI:30616"/>
    </ligand>
</feature>
<feature type="binding site" evidence="3">
    <location>
        <begin position="248"/>
        <end position="257"/>
    </location>
    <ligand>
        <name>ATP</name>
        <dbReference type="ChEBI" id="CHEBI:30616"/>
    </ligand>
</feature>
<feature type="binding site" evidence="3">
    <location>
        <position position="258"/>
    </location>
    <ligand>
        <name>(6S)-NADPHX</name>
        <dbReference type="ChEBI" id="CHEBI:64076"/>
    </ligand>
</feature>
<sequence length="330" mass="35873">MNLLKRATFIFSEQPLSLAIVIERSFSLGSSGMDNVIPLVRNTIPPLTSKKHKGQDGRIGIIGGCQEYTGAPFFAAISALKVGADLSHVFCTKDAAPVIKSYSPELIVHPVLDSPNAVEEIEKWLPRLHSVVVGPGLGREDMLLKNAKEIIERSKLRGIPVIIDADGLWLVAKEPSVIQGYQRGILTPNFMEFTRLYEAMHHEPLDSSDHKRSAQQLSIALGHLTLVLKGEEDIITDGKNILTCSQEGSGRRCGGQGDLLSGSLGAFAHWAFSSPSDATKGMNPSLVAAFGATSLTRQCNRQAFHKHGRSTTTSDMIQEINSAFKKLFES</sequence>
<keyword id="KW-0067">ATP-binding</keyword>
<keyword id="KW-0456">Lyase</keyword>
<keyword id="KW-0520">NAD</keyword>
<keyword id="KW-0521">NADP</keyword>
<keyword id="KW-0547">Nucleotide-binding</keyword>
<keyword id="KW-0597">Phosphoprotein</keyword>
<keyword id="KW-1185">Reference proteome</keyword>
<gene>
    <name evidence="1" type="primary">naxd</name>
    <name type="ORF">zgc:171429</name>
</gene>
<comment type="function">
    <text evidence="3">Catalyzes the dehydration of the S-form of NAD(P)HX at the expense of ATP, which is converted to ADP. Together with NAD(P)HX epimerase, which catalyzes the epimerization of the S- and R-forms, the enzyme allows the repair of both epimers of NAD(P)HX, a damaged form of NAD(P)H that is a result of enzymatic or heat-dependent hydration.</text>
</comment>
<comment type="catalytic activity">
    <reaction evidence="2 3">
        <text>(6S)-NADHX + ATP = ADP + phosphate + NADH + H(+)</text>
        <dbReference type="Rhea" id="RHEA:19017"/>
        <dbReference type="ChEBI" id="CHEBI:15378"/>
        <dbReference type="ChEBI" id="CHEBI:30616"/>
        <dbReference type="ChEBI" id="CHEBI:43474"/>
        <dbReference type="ChEBI" id="CHEBI:57945"/>
        <dbReference type="ChEBI" id="CHEBI:64074"/>
        <dbReference type="ChEBI" id="CHEBI:456216"/>
        <dbReference type="EC" id="4.2.1.93"/>
    </reaction>
</comment>
<comment type="catalytic activity">
    <reaction evidence="2">
        <text>(6S)-NADPHX + ATP = ADP + phosphate + NADPH + H(+)</text>
        <dbReference type="Rhea" id="RHEA:32231"/>
        <dbReference type="ChEBI" id="CHEBI:15378"/>
        <dbReference type="ChEBI" id="CHEBI:30616"/>
        <dbReference type="ChEBI" id="CHEBI:43474"/>
        <dbReference type="ChEBI" id="CHEBI:57783"/>
        <dbReference type="ChEBI" id="CHEBI:64076"/>
        <dbReference type="ChEBI" id="CHEBI:456216"/>
        <dbReference type="EC" id="4.2.1.93"/>
    </reaction>
</comment>
<comment type="cofactor">
    <cofactor evidence="3">
        <name>Mg(2+)</name>
        <dbReference type="ChEBI" id="CHEBI:18420"/>
    </cofactor>
</comment>
<comment type="similarity">
    <text evidence="3">Belongs to the NnrD/CARKD family.</text>
</comment>
<dbReference type="EC" id="4.2.1.93" evidence="2 3"/>
<dbReference type="EMBL" id="BX539345">
    <property type="status" value="NOT_ANNOTATED_CDS"/>
    <property type="molecule type" value="Genomic_DNA"/>
</dbReference>
<dbReference type="RefSeq" id="XP_005167521.1">
    <property type="nucleotide sequence ID" value="XM_005167464.5"/>
</dbReference>
<dbReference type="SMR" id="F1Q575"/>
<dbReference type="FunCoup" id="F1Q575">
    <property type="interactions" value="1352"/>
</dbReference>
<dbReference type="STRING" id="7955.ENSDARP00000107908"/>
<dbReference type="PaxDb" id="7955-ENSDARP00000107908"/>
<dbReference type="Ensembl" id="ENSDART00000147098">
    <property type="protein sequence ID" value="ENSDARP00000123516"/>
    <property type="gene ID" value="ENSDARG00000077119"/>
</dbReference>
<dbReference type="GeneID" id="797867"/>
<dbReference type="AGR" id="ZFIN:ZDB-GENE-080204-1"/>
<dbReference type="CTD" id="55739"/>
<dbReference type="ZFIN" id="ZDB-GENE-080204-1">
    <property type="gene designation" value="naxd"/>
</dbReference>
<dbReference type="eggNOG" id="KOG1721">
    <property type="taxonomic scope" value="Eukaryota"/>
</dbReference>
<dbReference type="eggNOG" id="KOG3974">
    <property type="taxonomic scope" value="Eukaryota"/>
</dbReference>
<dbReference type="HOGENOM" id="CLU_030651_3_0_1"/>
<dbReference type="InParanoid" id="F1Q575"/>
<dbReference type="OrthoDB" id="8110916at2759"/>
<dbReference type="PhylomeDB" id="F1Q575"/>
<dbReference type="Reactome" id="R-DRE-197264">
    <property type="pathway name" value="Nicotinamide salvaging"/>
</dbReference>
<dbReference type="PRO" id="PR:F1Q575"/>
<dbReference type="Proteomes" id="UP000000437">
    <property type="component" value="Chromosome 9"/>
</dbReference>
<dbReference type="Bgee" id="ENSDARG00000077119">
    <property type="expression patterns" value="Expressed in testis and 29 other cell types or tissues"/>
</dbReference>
<dbReference type="ExpressionAtlas" id="F1Q575">
    <property type="expression patterns" value="baseline"/>
</dbReference>
<dbReference type="GO" id="GO:0005524">
    <property type="term" value="F:ATP binding"/>
    <property type="evidence" value="ECO:0007669"/>
    <property type="project" value="UniProtKB-KW"/>
</dbReference>
<dbReference type="GO" id="GO:0047453">
    <property type="term" value="F:ATP-dependent NAD(P)H-hydrate dehydratase activity"/>
    <property type="evidence" value="ECO:0000318"/>
    <property type="project" value="GO_Central"/>
</dbReference>
<dbReference type="GO" id="GO:0110051">
    <property type="term" value="P:metabolite repair"/>
    <property type="evidence" value="ECO:0000318"/>
    <property type="project" value="GO_Central"/>
</dbReference>
<dbReference type="GO" id="GO:0046496">
    <property type="term" value="P:nicotinamide nucleotide metabolic process"/>
    <property type="evidence" value="ECO:0007669"/>
    <property type="project" value="UniProtKB-UniRule"/>
</dbReference>
<dbReference type="CDD" id="cd01171">
    <property type="entry name" value="YXKO-related"/>
    <property type="match status" value="1"/>
</dbReference>
<dbReference type="FunFam" id="3.40.1190.20:FF:000013">
    <property type="entry name" value="ATP-dependent (S)-NAD(P)H-hydrate dehydratase"/>
    <property type="match status" value="1"/>
</dbReference>
<dbReference type="Gene3D" id="3.40.1190.20">
    <property type="match status" value="1"/>
</dbReference>
<dbReference type="HAMAP" id="MF_01965">
    <property type="entry name" value="NADHX_dehydratase"/>
    <property type="match status" value="1"/>
</dbReference>
<dbReference type="InterPro" id="IPR017953">
    <property type="entry name" value="Carbohydrate_kinase_pred_CS"/>
</dbReference>
<dbReference type="InterPro" id="IPR000631">
    <property type="entry name" value="CARKD"/>
</dbReference>
<dbReference type="InterPro" id="IPR029056">
    <property type="entry name" value="Ribokinase-like"/>
</dbReference>
<dbReference type="NCBIfam" id="TIGR00196">
    <property type="entry name" value="yjeF_cterm"/>
    <property type="match status" value="1"/>
</dbReference>
<dbReference type="PANTHER" id="PTHR12592:SF0">
    <property type="entry name" value="ATP-DEPENDENT (S)-NAD(P)H-HYDRATE DEHYDRATASE"/>
    <property type="match status" value="1"/>
</dbReference>
<dbReference type="PANTHER" id="PTHR12592">
    <property type="entry name" value="ATP-DEPENDENT (S)-NAD(P)H-HYDRATE DEHYDRATASE FAMILY MEMBER"/>
    <property type="match status" value="1"/>
</dbReference>
<dbReference type="Pfam" id="PF01256">
    <property type="entry name" value="Carb_kinase"/>
    <property type="match status" value="1"/>
</dbReference>
<dbReference type="SUPFAM" id="SSF53613">
    <property type="entry name" value="Ribokinase-like"/>
    <property type="match status" value="1"/>
</dbReference>
<dbReference type="PROSITE" id="PS01049">
    <property type="entry name" value="YJEF_C_1"/>
    <property type="match status" value="1"/>
</dbReference>
<dbReference type="PROSITE" id="PS51383">
    <property type="entry name" value="YJEF_C_3"/>
    <property type="match status" value="1"/>
</dbReference>